<reference key="1">
    <citation type="journal article" date="2002" name="Nature">
        <title>The genome sequence and structure of rice chromosome 1.</title>
        <authorList>
            <person name="Sasaki T."/>
            <person name="Matsumoto T."/>
            <person name="Yamamoto K."/>
            <person name="Sakata K."/>
            <person name="Baba T."/>
            <person name="Katayose Y."/>
            <person name="Wu J."/>
            <person name="Niimura Y."/>
            <person name="Cheng Z."/>
            <person name="Nagamura Y."/>
            <person name="Antonio B.A."/>
            <person name="Kanamori H."/>
            <person name="Hosokawa S."/>
            <person name="Masukawa M."/>
            <person name="Arikawa K."/>
            <person name="Chiden Y."/>
            <person name="Hayashi M."/>
            <person name="Okamoto M."/>
            <person name="Ando T."/>
            <person name="Aoki H."/>
            <person name="Arita K."/>
            <person name="Hamada M."/>
            <person name="Harada C."/>
            <person name="Hijishita S."/>
            <person name="Honda M."/>
            <person name="Ichikawa Y."/>
            <person name="Idonuma A."/>
            <person name="Iijima M."/>
            <person name="Ikeda M."/>
            <person name="Ikeno M."/>
            <person name="Ito S."/>
            <person name="Ito T."/>
            <person name="Ito Y."/>
            <person name="Ito Y."/>
            <person name="Iwabuchi A."/>
            <person name="Kamiya K."/>
            <person name="Karasawa W."/>
            <person name="Katagiri S."/>
            <person name="Kikuta A."/>
            <person name="Kobayashi N."/>
            <person name="Kono I."/>
            <person name="Machita K."/>
            <person name="Maehara T."/>
            <person name="Mizuno H."/>
            <person name="Mizubayashi T."/>
            <person name="Mukai Y."/>
            <person name="Nagasaki H."/>
            <person name="Nakashima M."/>
            <person name="Nakama Y."/>
            <person name="Nakamichi Y."/>
            <person name="Nakamura M."/>
            <person name="Namiki N."/>
            <person name="Negishi M."/>
            <person name="Ohta I."/>
            <person name="Ono N."/>
            <person name="Saji S."/>
            <person name="Sakai K."/>
            <person name="Shibata M."/>
            <person name="Shimokawa T."/>
            <person name="Shomura A."/>
            <person name="Song J."/>
            <person name="Takazaki Y."/>
            <person name="Terasawa K."/>
            <person name="Tsuji K."/>
            <person name="Waki K."/>
            <person name="Yamagata H."/>
            <person name="Yamane H."/>
            <person name="Yoshiki S."/>
            <person name="Yoshihara R."/>
            <person name="Yukawa K."/>
            <person name="Zhong H."/>
            <person name="Iwama H."/>
            <person name="Endo T."/>
            <person name="Ito H."/>
            <person name="Hahn J.H."/>
            <person name="Kim H.-I."/>
            <person name="Eun M.-Y."/>
            <person name="Yano M."/>
            <person name="Jiang J."/>
            <person name="Gojobori T."/>
        </authorList>
    </citation>
    <scope>NUCLEOTIDE SEQUENCE [LARGE SCALE GENOMIC DNA]</scope>
    <source>
        <strain>cv. Nipponbare</strain>
    </source>
</reference>
<reference key="2">
    <citation type="journal article" date="2005" name="Nature">
        <title>The map-based sequence of the rice genome.</title>
        <authorList>
            <consortium name="International rice genome sequencing project (IRGSP)"/>
        </authorList>
    </citation>
    <scope>NUCLEOTIDE SEQUENCE [LARGE SCALE GENOMIC DNA]</scope>
    <source>
        <strain>cv. Nipponbare</strain>
    </source>
</reference>
<reference key="3">
    <citation type="journal article" date="2013" name="Rice">
        <title>Improvement of the Oryza sativa Nipponbare reference genome using next generation sequence and optical map data.</title>
        <authorList>
            <person name="Kawahara Y."/>
            <person name="de la Bastide M."/>
            <person name="Hamilton J.P."/>
            <person name="Kanamori H."/>
            <person name="McCombie W.R."/>
            <person name="Ouyang S."/>
            <person name="Schwartz D.C."/>
            <person name="Tanaka T."/>
            <person name="Wu J."/>
            <person name="Zhou S."/>
            <person name="Childs K.L."/>
            <person name="Davidson R.M."/>
            <person name="Lin H."/>
            <person name="Quesada-Ocampo L."/>
            <person name="Vaillancourt B."/>
            <person name="Sakai H."/>
            <person name="Lee S.S."/>
            <person name="Kim J."/>
            <person name="Numa H."/>
            <person name="Itoh T."/>
            <person name="Buell C.R."/>
            <person name="Matsumoto T."/>
        </authorList>
    </citation>
    <scope>GENOME REANNOTATION</scope>
    <source>
        <strain>cv. Nipponbare</strain>
    </source>
</reference>
<accession>Q9AWS7</accession>
<accession>A0A0P0UYB5</accession>
<comment type="subcellular location">
    <subcellularLocation>
        <location evidence="1 2">Nucleus</location>
    </subcellularLocation>
</comment>
<feature type="chain" id="PRO_0000377730" description="Putative AP2/ERF and B3 domain-containing protein Os01g0140700">
    <location>
        <begin position="1"/>
        <end position="317"/>
    </location>
</feature>
<feature type="DNA-binding region" description="AP2/ERF" evidence="2">
    <location>
        <begin position="66"/>
        <end position="121"/>
    </location>
</feature>
<feature type="DNA-binding region" description="TF-B3" evidence="1">
    <location>
        <begin position="178"/>
        <end position="287"/>
    </location>
</feature>
<feature type="region of interest" description="Disordered" evidence="3">
    <location>
        <begin position="1"/>
        <end position="37"/>
    </location>
</feature>
<feature type="compositionally biased region" description="Acidic residues" evidence="3">
    <location>
        <begin position="27"/>
        <end position="37"/>
    </location>
</feature>
<name>Y1407_ORYSJ</name>
<gene>
    <name type="ordered locus">Os01g0140700</name>
    <name type="ordered locus">LOC_Os01g04750</name>
    <name type="ORF">P0480E02.22</name>
</gene>
<sequence>MEQEAAMVVFSCNSGSGGSSSTTDSKQEEEEEEELAAMEEDELIHVVQAAELRLPSSTTATRPSSRYKGVVPQPNGRWGAQIYERHARVWLGTFPDEEAAARAYDVAALRFRGRDAVTNRAPAAEGASAGELAFLAAHSKAEVVDMLRKHTYDDELQQGLRRGSRAQPTPRWAREPLFEKAVTPSDVGKLNRLVVPKQQAERHFPFPLRRHSSDAAGKGVLLNFEDGDGKVWRFRYSYWNSSQSYVLTKGWSRFVREKGLRPGDTVAFSRSAAAWGTEKHLLIDCKKMERNNLATVDDDARVVVKLFGVDIAGDKTR</sequence>
<evidence type="ECO:0000255" key="1">
    <source>
        <dbReference type="PROSITE-ProRule" id="PRU00326"/>
    </source>
</evidence>
<evidence type="ECO:0000255" key="2">
    <source>
        <dbReference type="PROSITE-ProRule" id="PRU00366"/>
    </source>
</evidence>
<evidence type="ECO:0000256" key="3">
    <source>
        <dbReference type="SAM" id="MobiDB-lite"/>
    </source>
</evidence>
<protein>
    <recommendedName>
        <fullName>Putative AP2/ERF and B3 domain-containing protein Os01g0140700</fullName>
    </recommendedName>
</protein>
<dbReference type="EMBL" id="AP002913">
    <property type="protein sequence ID" value="BAB21211.1"/>
    <property type="molecule type" value="Genomic_DNA"/>
</dbReference>
<dbReference type="EMBL" id="AP014957">
    <property type="protein sequence ID" value="BAS70315.1"/>
    <property type="molecule type" value="Genomic_DNA"/>
</dbReference>
<dbReference type="SMR" id="Q9AWS7"/>
<dbReference type="FunCoup" id="Q9AWS7">
    <property type="interactions" value="1"/>
</dbReference>
<dbReference type="STRING" id="39947.Q9AWS7"/>
<dbReference type="PaxDb" id="39947-Q9AWS7"/>
<dbReference type="EnsemblPlants" id="Os01t0140700-01">
    <property type="protein sequence ID" value="Os01t0140700-01"/>
    <property type="gene ID" value="Os01g0140700"/>
</dbReference>
<dbReference type="Gramene" id="Os01t0140700-01">
    <property type="protein sequence ID" value="Os01t0140700-01"/>
    <property type="gene ID" value="Os01g0140700"/>
</dbReference>
<dbReference type="eggNOG" id="ENOG502QRVI">
    <property type="taxonomic scope" value="Eukaryota"/>
</dbReference>
<dbReference type="HOGENOM" id="CLU_038898_0_0_1"/>
<dbReference type="InParanoid" id="Q9AWS7"/>
<dbReference type="OMA" id="KQHGEKH"/>
<dbReference type="OrthoDB" id="2020802at2759"/>
<dbReference type="Proteomes" id="UP000000763">
    <property type="component" value="Chromosome 1"/>
</dbReference>
<dbReference type="Proteomes" id="UP000059680">
    <property type="component" value="Chromosome 1"/>
</dbReference>
<dbReference type="GO" id="GO:0005634">
    <property type="term" value="C:nucleus"/>
    <property type="evidence" value="ECO:0007669"/>
    <property type="project" value="UniProtKB-SubCell"/>
</dbReference>
<dbReference type="GO" id="GO:0003677">
    <property type="term" value="F:DNA binding"/>
    <property type="evidence" value="ECO:0007669"/>
    <property type="project" value="UniProtKB-KW"/>
</dbReference>
<dbReference type="GO" id="GO:0003700">
    <property type="term" value="F:DNA-binding transcription factor activity"/>
    <property type="evidence" value="ECO:0007669"/>
    <property type="project" value="InterPro"/>
</dbReference>
<dbReference type="CDD" id="cd00018">
    <property type="entry name" value="AP2"/>
    <property type="match status" value="1"/>
</dbReference>
<dbReference type="CDD" id="cd10017">
    <property type="entry name" value="B3_DNA"/>
    <property type="match status" value="1"/>
</dbReference>
<dbReference type="FunFam" id="3.30.730.10:FF:000008">
    <property type="entry name" value="AP2 domain-containing protein RAP2.8"/>
    <property type="match status" value="1"/>
</dbReference>
<dbReference type="Gene3D" id="3.30.730.10">
    <property type="entry name" value="AP2/ERF domain"/>
    <property type="match status" value="1"/>
</dbReference>
<dbReference type="Gene3D" id="2.40.330.10">
    <property type="entry name" value="DNA-binding pseudobarrel domain"/>
    <property type="match status" value="1"/>
</dbReference>
<dbReference type="InterPro" id="IPR001471">
    <property type="entry name" value="AP2/ERF_dom"/>
</dbReference>
<dbReference type="InterPro" id="IPR036955">
    <property type="entry name" value="AP2/ERF_dom_sf"/>
</dbReference>
<dbReference type="InterPro" id="IPR003340">
    <property type="entry name" value="B3_DNA-bd"/>
</dbReference>
<dbReference type="InterPro" id="IPR016177">
    <property type="entry name" value="DNA-bd_dom_sf"/>
</dbReference>
<dbReference type="InterPro" id="IPR015300">
    <property type="entry name" value="DNA-bd_pseudobarrel_sf"/>
</dbReference>
<dbReference type="InterPro" id="IPR044800">
    <property type="entry name" value="LEC2-like"/>
</dbReference>
<dbReference type="PANTHER" id="PTHR31140:SF56">
    <property type="entry name" value="AP2_ERF AND B3 DOMAIN-CONTAINING PROTEIN OS01G0141000"/>
    <property type="match status" value="1"/>
</dbReference>
<dbReference type="PANTHER" id="PTHR31140">
    <property type="entry name" value="B3 DOMAIN-CONTAINING TRANSCRIPTION FACTOR ABI3"/>
    <property type="match status" value="1"/>
</dbReference>
<dbReference type="Pfam" id="PF00847">
    <property type="entry name" value="AP2"/>
    <property type="match status" value="1"/>
</dbReference>
<dbReference type="Pfam" id="PF02362">
    <property type="entry name" value="B3"/>
    <property type="match status" value="1"/>
</dbReference>
<dbReference type="SMART" id="SM00380">
    <property type="entry name" value="AP2"/>
    <property type="match status" value="1"/>
</dbReference>
<dbReference type="SMART" id="SM01019">
    <property type="entry name" value="B3"/>
    <property type="match status" value="1"/>
</dbReference>
<dbReference type="SUPFAM" id="SSF54171">
    <property type="entry name" value="DNA-binding domain"/>
    <property type="match status" value="1"/>
</dbReference>
<dbReference type="SUPFAM" id="SSF101936">
    <property type="entry name" value="DNA-binding pseudobarrel domain"/>
    <property type="match status" value="1"/>
</dbReference>
<dbReference type="PROSITE" id="PS51032">
    <property type="entry name" value="AP2_ERF"/>
    <property type="match status" value="1"/>
</dbReference>
<dbReference type="PROSITE" id="PS50863">
    <property type="entry name" value="B3"/>
    <property type="match status" value="1"/>
</dbReference>
<proteinExistence type="inferred from homology"/>
<organism>
    <name type="scientific">Oryza sativa subsp. japonica</name>
    <name type="common">Rice</name>
    <dbReference type="NCBI Taxonomy" id="39947"/>
    <lineage>
        <taxon>Eukaryota</taxon>
        <taxon>Viridiplantae</taxon>
        <taxon>Streptophyta</taxon>
        <taxon>Embryophyta</taxon>
        <taxon>Tracheophyta</taxon>
        <taxon>Spermatophyta</taxon>
        <taxon>Magnoliopsida</taxon>
        <taxon>Liliopsida</taxon>
        <taxon>Poales</taxon>
        <taxon>Poaceae</taxon>
        <taxon>BOP clade</taxon>
        <taxon>Oryzoideae</taxon>
        <taxon>Oryzeae</taxon>
        <taxon>Oryzinae</taxon>
        <taxon>Oryza</taxon>
        <taxon>Oryza sativa</taxon>
    </lineage>
</organism>
<keyword id="KW-0238">DNA-binding</keyword>
<keyword id="KW-0539">Nucleus</keyword>
<keyword id="KW-1185">Reference proteome</keyword>
<keyword id="KW-0804">Transcription</keyword>
<keyword id="KW-0805">Transcription regulation</keyword>